<sequence length="15" mass="1727">LTCYKGYHDTVVCKP</sequence>
<dbReference type="Proteomes" id="UP000472273">
    <property type="component" value="Unplaced"/>
</dbReference>
<dbReference type="GO" id="GO:0005576">
    <property type="term" value="C:extracellular region"/>
    <property type="evidence" value="ECO:0007669"/>
    <property type="project" value="UniProtKB-SubCell"/>
</dbReference>
<dbReference type="GO" id="GO:0030550">
    <property type="term" value="F:acetylcholine receptor inhibitor activity"/>
    <property type="evidence" value="ECO:0007669"/>
    <property type="project" value="UniProtKB-KW"/>
</dbReference>
<dbReference type="GO" id="GO:0099106">
    <property type="term" value="F:ion channel regulator activity"/>
    <property type="evidence" value="ECO:0007669"/>
    <property type="project" value="UniProtKB-KW"/>
</dbReference>
<dbReference type="GO" id="GO:0090729">
    <property type="term" value="F:toxin activity"/>
    <property type="evidence" value="ECO:0007669"/>
    <property type="project" value="UniProtKB-KW"/>
</dbReference>
<keyword id="KW-0008">Acetylcholine receptor inhibiting toxin</keyword>
<keyword id="KW-0903">Direct protein sequencing</keyword>
<keyword id="KW-0872">Ion channel impairing toxin</keyword>
<keyword id="KW-0528">Neurotoxin</keyword>
<keyword id="KW-0629">Postsynaptic neurotoxin</keyword>
<keyword id="KW-1185">Reference proteome</keyword>
<keyword id="KW-0964">Secreted</keyword>
<keyword id="KW-0800">Toxin</keyword>
<accession>P59073</accession>
<feature type="chain" id="PRO_0000093617" description="Short neurotoxin N2" evidence="2">
    <location>
        <begin position="1"/>
        <end position="15" status="greater than"/>
    </location>
</feature>
<feature type="unsure residue">
    <location>
        <position position="3"/>
    </location>
</feature>
<feature type="unsure residue">
    <location>
        <position position="13"/>
    </location>
</feature>
<feature type="non-terminal residue">
    <location>
        <position position="15"/>
    </location>
</feature>
<organism>
    <name type="scientific">Pseudonaja textilis</name>
    <name type="common">Eastern brown snake</name>
    <dbReference type="NCBI Taxonomy" id="8673"/>
    <lineage>
        <taxon>Eukaryota</taxon>
        <taxon>Metazoa</taxon>
        <taxon>Chordata</taxon>
        <taxon>Craniata</taxon>
        <taxon>Vertebrata</taxon>
        <taxon>Euteleostomi</taxon>
        <taxon>Lepidosauria</taxon>
        <taxon>Squamata</taxon>
        <taxon>Bifurcata</taxon>
        <taxon>Unidentata</taxon>
        <taxon>Episquamata</taxon>
        <taxon>Toxicofera</taxon>
        <taxon>Serpentes</taxon>
        <taxon>Colubroidea</taxon>
        <taxon>Elapidae</taxon>
        <taxon>Hydrophiinae</taxon>
        <taxon>Pseudonaja</taxon>
    </lineage>
</organism>
<evidence type="ECO:0000250" key="1">
    <source>
        <dbReference type="UniProtKB" id="P60615"/>
    </source>
</evidence>
<evidence type="ECO:0000269" key="2">
    <source>
    </source>
</evidence>
<evidence type="ECO:0000305" key="3"/>
<name>3S332_PSETE</name>
<reference key="1">
    <citation type="journal article" date="1999" name="Eur. J. Biochem.">
        <title>Postsynaptic short-chain neurotoxins from Pseudonaja textilis: cDNA cloning, expression and protein characterization.</title>
        <authorList>
            <person name="Gong N.L."/>
            <person name="Armugam A."/>
            <person name="Jeyaseelan K."/>
        </authorList>
    </citation>
    <scope>PROTEIN SEQUENCE</scope>
    <scope>TOXIC DOSE</scope>
    <scope>MASS SPECTROMETRY</scope>
    <scope>SUBCELLULAR LOCATION</scope>
    <source>
        <tissue>Venom</tissue>
    </source>
</reference>
<protein>
    <recommendedName>
        <fullName>Short neurotoxin N2</fullName>
    </recommendedName>
    <alternativeName>
        <fullName>Alpha-neurotoxin</fullName>
    </alternativeName>
</protein>
<proteinExistence type="evidence at protein level"/>
<comment type="function">
    <text evidence="1 2">Binds with high affinity to muscular (alpha-1/CHRNA1) and neuronal (alpha-7/CHRNA7) nicotinic acetylcholine receptor (nAChR) and hinders acetylcholine binding to the receptor, thereby impairing neuromuscular and neuronal transmission.</text>
</comment>
<comment type="subcellular location">
    <subcellularLocation>
        <location evidence="2">Secreted</location>
    </subcellularLocation>
</comment>
<comment type="tissue specificity">
    <text evidence="3">Expressed by the venom gland.</text>
</comment>
<comment type="mass spectrometry" mass="6345.0" method="Electrospray" evidence="2"/>
<comment type="toxic dose">
    <text evidence="2">LD(50) is 0.80 mg/kg by intravenous injection.</text>
</comment>
<comment type="similarity">
    <text evidence="3">Belongs to the three-finger toxin family. Short-chain subfamily. Type III alpha-neurotoxin sub-subfamily.</text>
</comment>